<proteinExistence type="inferred from homology"/>
<protein>
    <recommendedName>
        <fullName evidence="1">Holliday junction branch migration complex subunit RuvA</fullName>
    </recommendedName>
</protein>
<evidence type="ECO:0000255" key="1">
    <source>
        <dbReference type="HAMAP-Rule" id="MF_00031"/>
    </source>
</evidence>
<feature type="chain" id="PRO_1000002544" description="Holliday junction branch migration complex subunit RuvA">
    <location>
        <begin position="1"/>
        <end position="202"/>
    </location>
</feature>
<feature type="region of interest" description="Domain I" evidence="1">
    <location>
        <begin position="1"/>
        <end position="64"/>
    </location>
</feature>
<feature type="region of interest" description="Domain II" evidence="1">
    <location>
        <begin position="65"/>
        <end position="143"/>
    </location>
</feature>
<feature type="region of interest" description="Flexible linker" evidence="1">
    <location>
        <begin position="144"/>
        <end position="149"/>
    </location>
</feature>
<feature type="region of interest" description="Domain III" evidence="1">
    <location>
        <begin position="150"/>
        <end position="202"/>
    </location>
</feature>
<keyword id="KW-0963">Cytoplasm</keyword>
<keyword id="KW-0227">DNA damage</keyword>
<keyword id="KW-0233">DNA recombination</keyword>
<keyword id="KW-0234">DNA repair</keyword>
<keyword id="KW-0238">DNA-binding</keyword>
<keyword id="KW-1185">Reference proteome</keyword>
<dbReference type="EMBL" id="CP000159">
    <property type="protein sequence ID" value="ABC46182.1"/>
    <property type="molecule type" value="Genomic_DNA"/>
</dbReference>
<dbReference type="RefSeq" id="WP_011403236.1">
    <property type="nucleotide sequence ID" value="NC_007677.1"/>
</dbReference>
<dbReference type="RefSeq" id="YP_444603.1">
    <property type="nucleotide sequence ID" value="NC_007677.1"/>
</dbReference>
<dbReference type="SMR" id="Q2S5C8"/>
<dbReference type="STRING" id="309807.SRU_0458"/>
<dbReference type="EnsemblBacteria" id="ABC46182">
    <property type="protein sequence ID" value="ABC46182"/>
    <property type="gene ID" value="SRU_0458"/>
</dbReference>
<dbReference type="GeneID" id="83727379"/>
<dbReference type="KEGG" id="sru:SRU_0458"/>
<dbReference type="eggNOG" id="COG0632">
    <property type="taxonomic scope" value="Bacteria"/>
</dbReference>
<dbReference type="HOGENOM" id="CLU_087936_3_0_10"/>
<dbReference type="OrthoDB" id="5293449at2"/>
<dbReference type="Proteomes" id="UP000008674">
    <property type="component" value="Chromosome"/>
</dbReference>
<dbReference type="GO" id="GO:0005737">
    <property type="term" value="C:cytoplasm"/>
    <property type="evidence" value="ECO:0007669"/>
    <property type="project" value="UniProtKB-SubCell"/>
</dbReference>
<dbReference type="GO" id="GO:0009379">
    <property type="term" value="C:Holliday junction helicase complex"/>
    <property type="evidence" value="ECO:0007669"/>
    <property type="project" value="InterPro"/>
</dbReference>
<dbReference type="GO" id="GO:0048476">
    <property type="term" value="C:Holliday junction resolvase complex"/>
    <property type="evidence" value="ECO:0007669"/>
    <property type="project" value="UniProtKB-UniRule"/>
</dbReference>
<dbReference type="GO" id="GO:0005524">
    <property type="term" value="F:ATP binding"/>
    <property type="evidence" value="ECO:0007669"/>
    <property type="project" value="InterPro"/>
</dbReference>
<dbReference type="GO" id="GO:0000400">
    <property type="term" value="F:four-way junction DNA binding"/>
    <property type="evidence" value="ECO:0007669"/>
    <property type="project" value="UniProtKB-UniRule"/>
</dbReference>
<dbReference type="GO" id="GO:0009378">
    <property type="term" value="F:four-way junction helicase activity"/>
    <property type="evidence" value="ECO:0007669"/>
    <property type="project" value="InterPro"/>
</dbReference>
<dbReference type="GO" id="GO:0006310">
    <property type="term" value="P:DNA recombination"/>
    <property type="evidence" value="ECO:0007669"/>
    <property type="project" value="UniProtKB-UniRule"/>
</dbReference>
<dbReference type="GO" id="GO:0006281">
    <property type="term" value="P:DNA repair"/>
    <property type="evidence" value="ECO:0007669"/>
    <property type="project" value="UniProtKB-UniRule"/>
</dbReference>
<dbReference type="CDD" id="cd14332">
    <property type="entry name" value="UBA_RuvA_C"/>
    <property type="match status" value="1"/>
</dbReference>
<dbReference type="Gene3D" id="1.10.150.20">
    <property type="entry name" value="5' to 3' exonuclease, C-terminal subdomain"/>
    <property type="match status" value="1"/>
</dbReference>
<dbReference type="Gene3D" id="1.10.8.10">
    <property type="entry name" value="DNA helicase RuvA subunit, C-terminal domain"/>
    <property type="match status" value="1"/>
</dbReference>
<dbReference type="Gene3D" id="2.40.50.140">
    <property type="entry name" value="Nucleic acid-binding proteins"/>
    <property type="match status" value="1"/>
</dbReference>
<dbReference type="HAMAP" id="MF_00031">
    <property type="entry name" value="DNA_HJ_migration_RuvA"/>
    <property type="match status" value="1"/>
</dbReference>
<dbReference type="InterPro" id="IPR013849">
    <property type="entry name" value="DNA_helicase_Holl-junc_RuvA_I"/>
</dbReference>
<dbReference type="InterPro" id="IPR003583">
    <property type="entry name" value="Hlx-hairpin-Hlx_DNA-bd_motif"/>
</dbReference>
<dbReference type="InterPro" id="IPR012340">
    <property type="entry name" value="NA-bd_OB-fold"/>
</dbReference>
<dbReference type="InterPro" id="IPR000085">
    <property type="entry name" value="RuvA"/>
</dbReference>
<dbReference type="InterPro" id="IPR010994">
    <property type="entry name" value="RuvA_2-like"/>
</dbReference>
<dbReference type="InterPro" id="IPR011114">
    <property type="entry name" value="RuvA_C"/>
</dbReference>
<dbReference type="InterPro" id="IPR036267">
    <property type="entry name" value="RuvA_C_sf"/>
</dbReference>
<dbReference type="NCBIfam" id="TIGR00084">
    <property type="entry name" value="ruvA"/>
    <property type="match status" value="1"/>
</dbReference>
<dbReference type="Pfam" id="PF14520">
    <property type="entry name" value="HHH_5"/>
    <property type="match status" value="1"/>
</dbReference>
<dbReference type="Pfam" id="PF07499">
    <property type="entry name" value="RuvA_C"/>
    <property type="match status" value="1"/>
</dbReference>
<dbReference type="Pfam" id="PF01330">
    <property type="entry name" value="RuvA_N"/>
    <property type="match status" value="1"/>
</dbReference>
<dbReference type="SMART" id="SM00278">
    <property type="entry name" value="HhH1"/>
    <property type="match status" value="2"/>
</dbReference>
<dbReference type="SUPFAM" id="SSF46929">
    <property type="entry name" value="DNA helicase RuvA subunit, C-terminal domain"/>
    <property type="match status" value="1"/>
</dbReference>
<dbReference type="SUPFAM" id="SSF50249">
    <property type="entry name" value="Nucleic acid-binding proteins"/>
    <property type="match status" value="1"/>
</dbReference>
<dbReference type="SUPFAM" id="SSF47781">
    <property type="entry name" value="RuvA domain 2-like"/>
    <property type="match status" value="1"/>
</dbReference>
<comment type="function">
    <text evidence="1">The RuvA-RuvB-RuvC complex processes Holliday junction (HJ) DNA during genetic recombination and DNA repair, while the RuvA-RuvB complex plays an important role in the rescue of blocked DNA replication forks via replication fork reversal (RFR). RuvA specifically binds to HJ cruciform DNA, conferring on it an open structure. The RuvB hexamer acts as an ATP-dependent pump, pulling dsDNA into and through the RuvAB complex. HJ branch migration allows RuvC to scan DNA until it finds its consensus sequence, where it cleaves and resolves the cruciform DNA.</text>
</comment>
<comment type="subunit">
    <text evidence="1">Homotetramer. Forms an RuvA(8)-RuvB(12)-Holliday junction (HJ) complex. HJ DNA is sandwiched between 2 RuvA tetramers; dsDNA enters through RuvA and exits via RuvB. An RuvB hexamer assembles on each DNA strand where it exits the tetramer. Each RuvB hexamer is contacted by two RuvA subunits (via domain III) on 2 adjacent RuvB subunits; this complex drives branch migration. In the full resolvosome a probable DNA-RuvA(4)-RuvB(12)-RuvC(2) complex forms which resolves the HJ.</text>
</comment>
<comment type="subcellular location">
    <subcellularLocation>
        <location evidence="1">Cytoplasm</location>
    </subcellularLocation>
</comment>
<comment type="domain">
    <text evidence="1">Has three domains with a flexible linker between the domains II and III and assumes an 'L' shape. Domain III is highly mobile and contacts RuvB.</text>
</comment>
<comment type="similarity">
    <text evidence="1">Belongs to the RuvA family.</text>
</comment>
<reference key="1">
    <citation type="journal article" date="2005" name="Proc. Natl. Acad. Sci. U.S.A.">
        <title>The genome of Salinibacter ruber: convergence and gene exchange among hyperhalophilic bacteria and archaea.</title>
        <authorList>
            <person name="Mongodin E.F."/>
            <person name="Nelson K.E."/>
            <person name="Daugherty S."/>
            <person name="DeBoy R.T."/>
            <person name="Wister J."/>
            <person name="Khouri H."/>
            <person name="Weidman J."/>
            <person name="Walsh D.A."/>
            <person name="Papke R.T."/>
            <person name="Sanchez Perez G."/>
            <person name="Sharma A.K."/>
            <person name="Nesbo C.L."/>
            <person name="MacLeod D."/>
            <person name="Bapteste E."/>
            <person name="Doolittle W.F."/>
            <person name="Charlebois R.L."/>
            <person name="Legault B."/>
            <person name="Rodriguez-Valera F."/>
        </authorList>
    </citation>
    <scope>NUCLEOTIDE SEQUENCE [LARGE SCALE GENOMIC DNA]</scope>
    <source>
        <strain>DSM 13855 / CECT 5946 / M31</strain>
    </source>
</reference>
<organism>
    <name type="scientific">Salinibacter ruber (strain DSM 13855 / M31)</name>
    <dbReference type="NCBI Taxonomy" id="309807"/>
    <lineage>
        <taxon>Bacteria</taxon>
        <taxon>Pseudomonadati</taxon>
        <taxon>Rhodothermota</taxon>
        <taxon>Rhodothermia</taxon>
        <taxon>Rhodothermales</taxon>
        <taxon>Salinibacteraceae</taxon>
        <taxon>Salinibacter</taxon>
    </lineage>
</organism>
<accession>Q2S5C8</accession>
<name>RUVA_SALRD</name>
<gene>
    <name evidence="1" type="primary">ruvA</name>
    <name type="ordered locus">SRU_0458</name>
</gene>
<sequence length="202" mass="22126">MIDYVSGTLVDKTTDSALVDVNGLGYRVHVPTSTYKRLPDTDEEVTLHTYHYLREDDESLYGFATKAERTVFETMTGVSRVGPKLALSALSAMTPTELRDHVMEGDKSRLTQISGVGTKTADRLIVELRDRLADLDVLEDTSPLSGGSDARAEARADALEALTELGLSKADAERSIRQVLRDNAGIQSADELVRRALKADQE</sequence>